<organism>
    <name type="scientific">Aspergillus flavus (strain ATCC 200026 / FGSC A1120 / IAM 13836 / NRRL 3357 / JCM 12722 / SRRC 167)</name>
    <dbReference type="NCBI Taxonomy" id="332952"/>
    <lineage>
        <taxon>Eukaryota</taxon>
        <taxon>Fungi</taxon>
        <taxon>Dikarya</taxon>
        <taxon>Ascomycota</taxon>
        <taxon>Pezizomycotina</taxon>
        <taxon>Eurotiomycetes</taxon>
        <taxon>Eurotiomycetidae</taxon>
        <taxon>Eurotiales</taxon>
        <taxon>Aspergillaceae</taxon>
        <taxon>Aspergillus</taxon>
        <taxon>Aspergillus subgen. Circumdati</taxon>
    </lineage>
</organism>
<feature type="signal peptide" evidence="2">
    <location>
        <begin position="1"/>
        <end position="14"/>
    </location>
</feature>
<feature type="chain" id="PRO_0000394915" description="Probable alpha/beta-glucosidase agdC">
    <location>
        <begin position="15"/>
        <end position="877"/>
    </location>
</feature>
<feature type="region of interest" description="Disordered" evidence="4">
    <location>
        <begin position="432"/>
        <end position="476"/>
    </location>
</feature>
<feature type="compositionally biased region" description="Pro residues" evidence="4">
    <location>
        <begin position="447"/>
        <end position="463"/>
    </location>
</feature>
<feature type="active site" description="Nucleophile" evidence="3">
    <location>
        <position position="422"/>
    </location>
</feature>
<feature type="active site" evidence="1">
    <location>
        <position position="425"/>
    </location>
</feature>
<feature type="active site" description="Proton donor" evidence="1">
    <location>
        <position position="573"/>
    </location>
</feature>
<feature type="glycosylation site" description="N-linked (GlcNAc...) asparagine" evidence="2">
    <location>
        <position position="171"/>
    </location>
</feature>
<feature type="glycosylation site" description="N-linked (GlcNAc...) asparagine" evidence="2">
    <location>
        <position position="293"/>
    </location>
</feature>
<feature type="glycosylation site" description="N-linked (GlcNAc...) asparagine" evidence="2">
    <location>
        <position position="373"/>
    </location>
</feature>
<feature type="glycosylation site" description="N-linked (GlcNAc...) asparagine" evidence="2">
    <location>
        <position position="508"/>
    </location>
</feature>
<feature type="glycosylation site" description="N-linked (GlcNAc...) asparagine" evidence="2">
    <location>
        <position position="574"/>
    </location>
</feature>
<feature type="glycosylation site" description="N-linked (GlcNAc...) asparagine" evidence="2">
    <location>
        <position position="610"/>
    </location>
</feature>
<feature type="glycosylation site" description="N-linked (GlcNAc...) asparagine" evidence="2">
    <location>
        <position position="744"/>
    </location>
</feature>
<name>AGDC_ASPFN</name>
<dbReference type="EC" id="3.2.1.20"/>
<dbReference type="EC" id="3.2.1.21"/>
<dbReference type="EMBL" id="EQ963472">
    <property type="protein sequence ID" value="EED57633.1"/>
    <property type="molecule type" value="Genomic_DNA"/>
</dbReference>
<dbReference type="RefSeq" id="XP_002373245.1">
    <property type="nucleotide sequence ID" value="XM_002373204.1"/>
</dbReference>
<dbReference type="SMR" id="B8MZ41"/>
<dbReference type="STRING" id="332952.B8MZ41"/>
<dbReference type="GlyCosmos" id="B8MZ41">
    <property type="glycosylation" value="7 sites, No reported glycans"/>
</dbReference>
<dbReference type="EnsemblFungi" id="EED57633">
    <property type="protein sequence ID" value="EED57633"/>
    <property type="gene ID" value="AFLA_083300"/>
</dbReference>
<dbReference type="VEuPathDB" id="FungiDB:AFLA_003911"/>
<dbReference type="eggNOG" id="KOG1065">
    <property type="taxonomic scope" value="Eukaryota"/>
</dbReference>
<dbReference type="HOGENOM" id="CLU_000631_11_0_1"/>
<dbReference type="OMA" id="YKGAVWP"/>
<dbReference type="GO" id="GO:0005576">
    <property type="term" value="C:extracellular region"/>
    <property type="evidence" value="ECO:0007669"/>
    <property type="project" value="UniProtKB-SubCell"/>
</dbReference>
<dbReference type="GO" id="GO:0004558">
    <property type="term" value="F:alpha-1,4-glucosidase activity"/>
    <property type="evidence" value="ECO:0007669"/>
    <property type="project" value="UniProtKB-EC"/>
</dbReference>
<dbReference type="GO" id="GO:0008422">
    <property type="term" value="F:beta-glucosidase activity"/>
    <property type="evidence" value="ECO:0007669"/>
    <property type="project" value="UniProtKB-EC"/>
</dbReference>
<dbReference type="GO" id="GO:0030246">
    <property type="term" value="F:carbohydrate binding"/>
    <property type="evidence" value="ECO:0007669"/>
    <property type="project" value="InterPro"/>
</dbReference>
<dbReference type="GO" id="GO:0071555">
    <property type="term" value="P:cell wall organization"/>
    <property type="evidence" value="ECO:0007669"/>
    <property type="project" value="UniProtKB-KW"/>
</dbReference>
<dbReference type="GO" id="GO:0000272">
    <property type="term" value="P:polysaccharide catabolic process"/>
    <property type="evidence" value="ECO:0007669"/>
    <property type="project" value="UniProtKB-KW"/>
</dbReference>
<dbReference type="CDD" id="cd06602">
    <property type="entry name" value="GH31_MGAM_SI_GAA"/>
    <property type="match status" value="1"/>
</dbReference>
<dbReference type="CDD" id="cd14752">
    <property type="entry name" value="GH31_N"/>
    <property type="match status" value="1"/>
</dbReference>
<dbReference type="Gene3D" id="3.20.20.80">
    <property type="entry name" value="Glycosidases"/>
    <property type="match status" value="1"/>
</dbReference>
<dbReference type="Gene3D" id="2.60.40.1760">
    <property type="entry name" value="glycosyl hydrolase (family 31)"/>
    <property type="match status" value="1"/>
</dbReference>
<dbReference type="Gene3D" id="2.60.40.1180">
    <property type="entry name" value="Golgi alpha-mannosidase II"/>
    <property type="match status" value="2"/>
</dbReference>
<dbReference type="InterPro" id="IPR011013">
    <property type="entry name" value="Gal_mutarotase_sf_dom"/>
</dbReference>
<dbReference type="InterPro" id="IPR030458">
    <property type="entry name" value="Glyco_hydro_31_AS"/>
</dbReference>
<dbReference type="InterPro" id="IPR048395">
    <property type="entry name" value="Glyco_hydro_31_C"/>
</dbReference>
<dbReference type="InterPro" id="IPR025887">
    <property type="entry name" value="Glyco_hydro_31_N_dom"/>
</dbReference>
<dbReference type="InterPro" id="IPR000322">
    <property type="entry name" value="Glyco_hydro_31_TIM"/>
</dbReference>
<dbReference type="InterPro" id="IPR013780">
    <property type="entry name" value="Glyco_hydro_b"/>
</dbReference>
<dbReference type="InterPro" id="IPR017853">
    <property type="entry name" value="Glycoside_hydrolase_SF"/>
</dbReference>
<dbReference type="PANTHER" id="PTHR22762">
    <property type="entry name" value="ALPHA-GLUCOSIDASE"/>
    <property type="match status" value="1"/>
</dbReference>
<dbReference type="PANTHER" id="PTHR22762:SF67">
    <property type="entry name" value="ALPHA_BETA-GLUCOSIDASE AGDC-RELATED"/>
    <property type="match status" value="1"/>
</dbReference>
<dbReference type="Pfam" id="PF13802">
    <property type="entry name" value="Gal_mutarotas_2"/>
    <property type="match status" value="1"/>
</dbReference>
<dbReference type="Pfam" id="PF01055">
    <property type="entry name" value="Glyco_hydro_31_2nd"/>
    <property type="match status" value="1"/>
</dbReference>
<dbReference type="Pfam" id="PF21365">
    <property type="entry name" value="Glyco_hydro_31_3rd"/>
    <property type="match status" value="1"/>
</dbReference>
<dbReference type="SUPFAM" id="SSF51445">
    <property type="entry name" value="(Trans)glycosidases"/>
    <property type="match status" value="1"/>
</dbReference>
<dbReference type="SUPFAM" id="SSF74650">
    <property type="entry name" value="Galactose mutarotase-like"/>
    <property type="match status" value="1"/>
</dbReference>
<dbReference type="SUPFAM" id="SSF51011">
    <property type="entry name" value="Glycosyl hydrolase domain"/>
    <property type="match status" value="1"/>
</dbReference>
<dbReference type="PROSITE" id="PS00129">
    <property type="entry name" value="GLYCOSYL_HYDROL_F31_1"/>
    <property type="match status" value="1"/>
</dbReference>
<keyword id="KW-0119">Carbohydrate metabolism</keyword>
<keyword id="KW-0961">Cell wall biogenesis/degradation</keyword>
<keyword id="KW-0325">Glycoprotein</keyword>
<keyword id="KW-0326">Glycosidase</keyword>
<keyword id="KW-0378">Hydrolase</keyword>
<keyword id="KW-0624">Polysaccharide degradation</keyword>
<keyword id="KW-0964">Secreted</keyword>
<keyword id="KW-0732">Signal</keyword>
<proteinExistence type="inferred from homology"/>
<evidence type="ECO:0000250" key="1"/>
<evidence type="ECO:0000255" key="2"/>
<evidence type="ECO:0000255" key="3">
    <source>
        <dbReference type="PROSITE-ProRule" id="PRU10066"/>
    </source>
</evidence>
<evidence type="ECO:0000256" key="4">
    <source>
        <dbReference type="SAM" id="MobiDB-lite"/>
    </source>
</evidence>
<evidence type="ECO:0000305" key="5"/>
<accession>B8MZ41</accession>
<gene>
    <name type="primary">agdC</name>
    <name type="ORF">AFLA_083300</name>
</gene>
<reference key="1">
    <citation type="journal article" date="2015" name="Genome Announc.">
        <title>Genome sequence of Aspergillus flavus NRRL 3357, a strain that causes aflatoxin contamination of food and feed.</title>
        <authorList>
            <person name="Nierman W.C."/>
            <person name="Yu J."/>
            <person name="Fedorova-Abrams N.D."/>
            <person name="Losada L."/>
            <person name="Cleveland T.E."/>
            <person name="Bhatnagar D."/>
            <person name="Bennett J.W."/>
            <person name="Dean R."/>
            <person name="Payne G.A."/>
        </authorList>
    </citation>
    <scope>NUCLEOTIDE SEQUENCE [LARGE SCALE GENOMIC DNA]</scope>
    <source>
        <strain>ATCC 200026 / FGSC A1120 / IAM 13836 / NRRL 3357 / JCM 12722 / SRRC 167</strain>
    </source>
</reference>
<comment type="function">
    <text evidence="1">Glucosidase involved in the degradation of cellulosic biomass. Has both alpha- and beta-glucosidase activity (By similarity).</text>
</comment>
<comment type="catalytic activity">
    <reaction>
        <text>Hydrolysis of terminal, non-reducing (1-&gt;4)-linked alpha-D-glucose residues with release of alpha-D-glucose.</text>
        <dbReference type="EC" id="3.2.1.20"/>
    </reaction>
</comment>
<comment type="catalytic activity">
    <reaction>
        <text>Hydrolysis of terminal, non-reducing beta-D-glucosyl residues with release of beta-D-glucose.</text>
        <dbReference type="EC" id="3.2.1.21"/>
    </reaction>
</comment>
<comment type="subcellular location">
    <subcellularLocation>
        <location evidence="1">Secreted</location>
    </subcellularLocation>
</comment>
<comment type="similarity">
    <text evidence="5">Belongs to the glycosyl hydrolase 31 family.</text>
</comment>
<protein>
    <recommendedName>
        <fullName>Probable alpha/beta-glucosidase agdC</fullName>
        <ecNumber>3.2.1.20</ecNumber>
        <ecNumber>3.2.1.21</ecNumber>
    </recommendedName>
</protein>
<sequence length="877" mass="98792">MLGSLLLLAPLAGAAVIGSRADTKQCPGYKASNVQENDRSLTADLTLAGKPCNTYGTDLQNLKLLVEYQTDERLHVKIYDAEERVYQVPEKVTPRVDSGDGSSKDSALKFEYEEEPFSFTVKRDDEVLFDSSAENLIFQSQYLKLRTWLPENPYLYGLGEHTDPLRLSTTNYTRTFWNRDAYGTPANSNLYGTHPVYYDHRGESGTHGVFLLNSNGMDVFIDKTADGKQYLEYNALGGIFDFYFFTGSNPKEASIEYSKIVGLPAMQSYWTFGLHQCRYGYRDVYQVAEVVYNYTKAGIPLETMWTDIDYMDRRRVFSLDPDRFPLEKMRELVGYLHDHDQHYIVMVDPAVSVSDNGAFNRGLEQDVFLKTQNGSLYKGAVWPGVTAYPDWFHPDIQDYWNSEFSTFFNAETGVDIDGLWIDMNEASNFCPDPCTDPERYSSENNLPPAPPPVRSSSPRPLPGFPADFQPSSASRSQKRIVKAKVGLEGRDLLNPPYKIRNEAGSLSNKTINTGIVHAGEGYAEYDTHNLYGTMMSSSSREAMQYRRPEVRPLVITRSTYAGAGRDVGHWLGDNFSKWEHYRISIAEGLAFASMFQVPMVGADVCGFAGNTTEELCARWASLGAFFTFYRNHNEIGNIGQEFYVWPTVAESARKAIDIRYRLLDYIYTSFYKQSQTGEPFLQPVFYLYPEDENTFSIDLQFFYGDAILVSPVPDKGLTSVDAYFPDDIFYDWYTGTPVRGHGANITLSNIDITHIPLHIRGGSIIPIRSSSAMTTTELREKSFQLIIAPGLDGTASGSLYLDDGDSLEQKATLEVEFEYRKGVLHIDGKFELHASLVESVTLLGQGKGGSRARREDGTKKTIQTNLELSKPTEIKLE</sequence>